<protein>
    <recommendedName>
        <fullName evidence="1">Putative membrane protein insertion efficiency factor</fullName>
    </recommendedName>
</protein>
<gene>
    <name type="ordered locus">SPG_1758</name>
</gene>
<evidence type="ECO:0000255" key="1">
    <source>
        <dbReference type="HAMAP-Rule" id="MF_00386"/>
    </source>
</evidence>
<evidence type="ECO:0000256" key="2">
    <source>
        <dbReference type="SAM" id="MobiDB-lite"/>
    </source>
</evidence>
<feature type="chain" id="PRO_1000197791" description="Putative membrane protein insertion efficiency factor">
    <location>
        <begin position="1"/>
        <end position="80"/>
    </location>
</feature>
<feature type="region of interest" description="Disordered" evidence="2">
    <location>
        <begin position="61"/>
        <end position="80"/>
    </location>
</feature>
<feature type="compositionally biased region" description="Basic and acidic residues" evidence="2">
    <location>
        <begin position="62"/>
        <end position="80"/>
    </location>
</feature>
<accession>B5E1Y5</accession>
<organism>
    <name type="scientific">Streptococcus pneumoniae serotype 19F (strain G54)</name>
    <dbReference type="NCBI Taxonomy" id="512566"/>
    <lineage>
        <taxon>Bacteria</taxon>
        <taxon>Bacillati</taxon>
        <taxon>Bacillota</taxon>
        <taxon>Bacilli</taxon>
        <taxon>Lactobacillales</taxon>
        <taxon>Streptococcaceae</taxon>
        <taxon>Streptococcus</taxon>
    </lineage>
</organism>
<name>YIDD_STRP4</name>
<keyword id="KW-1003">Cell membrane</keyword>
<keyword id="KW-0472">Membrane</keyword>
<dbReference type="EMBL" id="CP001015">
    <property type="protein sequence ID" value="ACF56684.1"/>
    <property type="molecule type" value="Genomic_DNA"/>
</dbReference>
<dbReference type="KEGG" id="spx:SPG_1758"/>
<dbReference type="HOGENOM" id="CLU_144811_5_2_9"/>
<dbReference type="GO" id="GO:0005886">
    <property type="term" value="C:plasma membrane"/>
    <property type="evidence" value="ECO:0007669"/>
    <property type="project" value="UniProtKB-SubCell"/>
</dbReference>
<dbReference type="HAMAP" id="MF_00386">
    <property type="entry name" value="UPF0161_YidD"/>
    <property type="match status" value="1"/>
</dbReference>
<dbReference type="InterPro" id="IPR002696">
    <property type="entry name" value="Membr_insert_effic_factor_YidD"/>
</dbReference>
<dbReference type="NCBIfam" id="TIGR00278">
    <property type="entry name" value="membrane protein insertion efficiency factor YidD"/>
    <property type="match status" value="1"/>
</dbReference>
<dbReference type="PANTHER" id="PTHR33383">
    <property type="entry name" value="MEMBRANE PROTEIN INSERTION EFFICIENCY FACTOR-RELATED"/>
    <property type="match status" value="1"/>
</dbReference>
<dbReference type="PANTHER" id="PTHR33383:SF1">
    <property type="entry name" value="MEMBRANE PROTEIN INSERTION EFFICIENCY FACTOR-RELATED"/>
    <property type="match status" value="1"/>
</dbReference>
<dbReference type="Pfam" id="PF01809">
    <property type="entry name" value="YidD"/>
    <property type="match status" value="1"/>
</dbReference>
<dbReference type="SMART" id="SM01234">
    <property type="entry name" value="Haemolytic"/>
    <property type="match status" value="1"/>
</dbReference>
<sequence length="80" mass="9320">MKRILIAPVRFYQRFISPVFPPSCRFELTCSNYMIQAIEKHGFKGVLMGLARILRCHPWSKTGKDPVPDHFSLKRNQEGE</sequence>
<reference key="1">
    <citation type="journal article" date="2001" name="Microb. Drug Resist.">
        <title>Annotated draft genomic sequence from a Streptococcus pneumoniae type 19F clinical isolate.</title>
        <authorList>
            <person name="Dopazo J."/>
            <person name="Mendoza A."/>
            <person name="Herrero J."/>
            <person name="Caldara F."/>
            <person name="Humbert Y."/>
            <person name="Friedli L."/>
            <person name="Guerrier M."/>
            <person name="Grand-Schenk E."/>
            <person name="Gandin C."/>
            <person name="de Francesco M."/>
            <person name="Polissi A."/>
            <person name="Buell G."/>
            <person name="Feger G."/>
            <person name="Garcia E."/>
            <person name="Peitsch M."/>
            <person name="Garcia-Bustos J.F."/>
        </authorList>
    </citation>
    <scope>NUCLEOTIDE SEQUENCE [LARGE SCALE GENOMIC DNA]</scope>
    <source>
        <strain>G54</strain>
    </source>
</reference>
<reference key="2">
    <citation type="submission" date="2008-03" db="EMBL/GenBank/DDBJ databases">
        <title>Pneumococcal beta glucoside metabolism investigated by whole genome comparison.</title>
        <authorList>
            <person name="Mulas L."/>
            <person name="Trappetti C."/>
            <person name="Hakenbeck R."/>
            <person name="Iannelli F."/>
            <person name="Pozzi G."/>
            <person name="Davidsen T.M."/>
            <person name="Tettelin H."/>
            <person name="Oggioni M."/>
        </authorList>
    </citation>
    <scope>NUCLEOTIDE SEQUENCE [LARGE SCALE GENOMIC DNA]</scope>
    <source>
        <strain>G54</strain>
    </source>
</reference>
<comment type="function">
    <text evidence="1">Could be involved in insertion of integral membrane proteins into the membrane.</text>
</comment>
<comment type="subcellular location">
    <subcellularLocation>
        <location evidence="1">Cell membrane</location>
        <topology evidence="1">Peripheral membrane protein</topology>
        <orientation evidence="1">Cytoplasmic side</orientation>
    </subcellularLocation>
</comment>
<comment type="similarity">
    <text evidence="1">Belongs to the UPF0161 family.</text>
</comment>
<proteinExistence type="inferred from homology"/>